<gene>
    <name type="primary">adiC</name>
    <name type="ordered locus">SF4108</name>
    <name type="ordered locus">S3622</name>
</gene>
<accession>P60064</accession>
<accession>P39268</accession>
<accession>P39269</accession>
<protein>
    <recommendedName>
        <fullName>Arginine/agmatine antiporter</fullName>
    </recommendedName>
</protein>
<keyword id="KW-0029">Amino-acid transport</keyword>
<keyword id="KW-0050">Antiport</keyword>
<keyword id="KW-0997">Cell inner membrane</keyword>
<keyword id="KW-1003">Cell membrane</keyword>
<keyword id="KW-0472">Membrane</keyword>
<keyword id="KW-1185">Reference proteome</keyword>
<keyword id="KW-0812">Transmembrane</keyword>
<keyword id="KW-1133">Transmembrane helix</keyword>
<keyword id="KW-0813">Transport</keyword>
<organism>
    <name type="scientific">Shigella flexneri</name>
    <dbReference type="NCBI Taxonomy" id="623"/>
    <lineage>
        <taxon>Bacteria</taxon>
        <taxon>Pseudomonadati</taxon>
        <taxon>Pseudomonadota</taxon>
        <taxon>Gammaproteobacteria</taxon>
        <taxon>Enterobacterales</taxon>
        <taxon>Enterobacteriaceae</taxon>
        <taxon>Shigella</taxon>
    </lineage>
</organism>
<name>ADIC_SHIFL</name>
<sequence>MSSDADAHKVGLIPVTLMVSGNIMGSGVFLLPANLASTGGIAIYGWLVTIIGALGLSMVYAKMSFLDPSPGGSYAYARRCFGPFLGYQTNVLYWLACWIGNIAMVVIGVGYLSYFFPILKDPLVLTITCVVVLWIFVLLNIVGPKMITRVQAVATVLALIPIVGIAVFGWFWFRGETYMAAWNVSGLGTFGAIQSTLNVTLWSFIGVESASVAAGVVKNPKRNVPIATIGGVLIAAVCYVLSTTAIMGMIPNAALRVSASPFGDAARMALGDTAGAIVSFCAAAGCLGSLGGWTLLAGQTAKAAADDGLFPPIFARVNKAGTPVAGLIIVGILMTIFQLSSISPNATKEFGLVSSVSVIFTLVPYLYTCAALLLLGHGHFGKARPAYLAVTTIAFLYCIWAVVGSGAKEVMWSFVTLMVITAMYALNYNRLHKNPYPLDAPISKD</sequence>
<proteinExistence type="inferred from homology"/>
<dbReference type="EMBL" id="AE005674">
    <property type="protein sequence ID" value="AAN45533.1"/>
    <property type="molecule type" value="Genomic_DNA"/>
</dbReference>
<dbReference type="EMBL" id="AE014073">
    <property type="protein sequence ID" value="AAP18666.1"/>
    <property type="molecule type" value="Genomic_DNA"/>
</dbReference>
<dbReference type="RefSeq" id="WP_000093154.1">
    <property type="nucleotide sequence ID" value="NZ_WPGW01000049.1"/>
</dbReference>
<dbReference type="SMR" id="P60064"/>
<dbReference type="STRING" id="198214.SF4108"/>
<dbReference type="PaxDb" id="198214-SF4108"/>
<dbReference type="GeneID" id="93777720"/>
<dbReference type="KEGG" id="sfl:SF4108"/>
<dbReference type="KEGG" id="sfx:S3622"/>
<dbReference type="PATRIC" id="fig|198214.7.peg.4843"/>
<dbReference type="HOGENOM" id="CLU_007946_1_0_6"/>
<dbReference type="Proteomes" id="UP000001006">
    <property type="component" value="Chromosome"/>
</dbReference>
<dbReference type="Proteomes" id="UP000002673">
    <property type="component" value="Chromosome"/>
</dbReference>
<dbReference type="GO" id="GO:0005886">
    <property type="term" value="C:plasma membrane"/>
    <property type="evidence" value="ECO:0007669"/>
    <property type="project" value="UniProtKB-SubCell"/>
</dbReference>
<dbReference type="GO" id="GO:0015297">
    <property type="term" value="F:antiporter activity"/>
    <property type="evidence" value="ECO:0007669"/>
    <property type="project" value="UniProtKB-KW"/>
</dbReference>
<dbReference type="GO" id="GO:0006865">
    <property type="term" value="P:amino acid transport"/>
    <property type="evidence" value="ECO:0007669"/>
    <property type="project" value="UniProtKB-KW"/>
</dbReference>
<dbReference type="FunFam" id="1.20.1740.10:FF:000011">
    <property type="entry name" value="Arginine/agmatine antiporter"/>
    <property type="match status" value="1"/>
</dbReference>
<dbReference type="Gene3D" id="1.20.1740.10">
    <property type="entry name" value="Amino acid/polyamine transporter I"/>
    <property type="match status" value="1"/>
</dbReference>
<dbReference type="InterPro" id="IPR002293">
    <property type="entry name" value="AA/rel_permease1"/>
</dbReference>
<dbReference type="InterPro" id="IPR050367">
    <property type="entry name" value="APC_superfamily"/>
</dbReference>
<dbReference type="NCBIfam" id="NF007929">
    <property type="entry name" value="PRK10644.1"/>
    <property type="match status" value="1"/>
</dbReference>
<dbReference type="PANTHER" id="PTHR42770">
    <property type="entry name" value="AMINO ACID TRANSPORTER-RELATED"/>
    <property type="match status" value="1"/>
</dbReference>
<dbReference type="PANTHER" id="PTHR42770:SF18">
    <property type="entry name" value="ARGININE_AGMATINE ANTIPORTER"/>
    <property type="match status" value="1"/>
</dbReference>
<dbReference type="Pfam" id="PF13520">
    <property type="entry name" value="AA_permease_2"/>
    <property type="match status" value="1"/>
</dbReference>
<dbReference type="PIRSF" id="PIRSF006060">
    <property type="entry name" value="AA_transporter"/>
    <property type="match status" value="1"/>
</dbReference>
<evidence type="ECO:0000250" key="1">
    <source>
        <dbReference type="UniProtKB" id="P60061"/>
    </source>
</evidence>
<evidence type="ECO:0000250" key="2">
    <source>
        <dbReference type="UniProtKB" id="P60063"/>
    </source>
</evidence>
<evidence type="ECO:0000255" key="3"/>
<evidence type="ECO:0000305" key="4"/>
<feature type="chain" id="PRO_0000054233" description="Arginine/agmatine antiporter">
    <location>
        <begin position="1"/>
        <end position="445"/>
    </location>
</feature>
<feature type="topological domain" description="Cytoplasmic" evidence="3">
    <location>
        <begin position="1"/>
        <end position="9"/>
    </location>
</feature>
<feature type="transmembrane region" description="Helical" evidence="3">
    <location>
        <begin position="10"/>
        <end position="30"/>
    </location>
</feature>
<feature type="topological domain" description="Periplasmic" evidence="3">
    <location>
        <begin position="31"/>
        <end position="38"/>
    </location>
</feature>
<feature type="transmembrane region" description="Helical" evidence="3">
    <location>
        <begin position="39"/>
        <end position="59"/>
    </location>
</feature>
<feature type="topological domain" description="Cytoplasmic" evidence="3">
    <location>
        <begin position="60"/>
        <end position="98"/>
    </location>
</feature>
<feature type="transmembrane region" description="Helical" evidence="3">
    <location>
        <begin position="99"/>
        <end position="119"/>
    </location>
</feature>
<feature type="topological domain" description="Periplasmic" evidence="3">
    <location>
        <begin position="120"/>
        <end position="122"/>
    </location>
</feature>
<feature type="transmembrane region" description="Helical" evidence="3">
    <location>
        <begin position="123"/>
        <end position="143"/>
    </location>
</feature>
<feature type="topological domain" description="Cytoplasmic" evidence="3">
    <location>
        <begin position="144"/>
        <end position="152"/>
    </location>
</feature>
<feature type="transmembrane region" description="Helical" evidence="3">
    <location>
        <begin position="153"/>
        <end position="173"/>
    </location>
</feature>
<feature type="topological domain" description="Periplasmic" evidence="3">
    <location>
        <begin position="174"/>
        <end position="196"/>
    </location>
</feature>
<feature type="transmembrane region" description="Helical" evidence="3">
    <location>
        <begin position="197"/>
        <end position="217"/>
    </location>
</feature>
<feature type="topological domain" description="Cytoplasmic" evidence="3">
    <location>
        <begin position="218"/>
        <end position="225"/>
    </location>
</feature>
<feature type="transmembrane region" description="Helical" evidence="3">
    <location>
        <begin position="226"/>
        <end position="246"/>
    </location>
</feature>
<feature type="topological domain" description="Periplasmic" evidence="3">
    <location>
        <begin position="247"/>
        <end position="275"/>
    </location>
</feature>
<feature type="transmembrane region" description="Helical" evidence="3">
    <location>
        <begin position="276"/>
        <end position="296"/>
    </location>
</feature>
<feature type="topological domain" description="Cytoplasmic" evidence="3">
    <location>
        <begin position="297"/>
        <end position="321"/>
    </location>
</feature>
<feature type="transmembrane region" description="Helical" evidence="3">
    <location>
        <begin position="322"/>
        <end position="342"/>
    </location>
</feature>
<feature type="topological domain" description="Periplasmic" evidence="3">
    <location>
        <begin position="343"/>
        <end position="355"/>
    </location>
</feature>
<feature type="transmembrane region" description="Helical" evidence="3">
    <location>
        <begin position="356"/>
        <end position="376"/>
    </location>
</feature>
<feature type="topological domain" description="Cytoplasmic" evidence="3">
    <location>
        <begin position="377"/>
        <end position="385"/>
    </location>
</feature>
<feature type="transmembrane region" description="Helical" evidence="3">
    <location>
        <begin position="386"/>
        <end position="406"/>
    </location>
</feature>
<feature type="topological domain" description="Periplasmic" evidence="3">
    <location>
        <begin position="407"/>
        <end position="408"/>
    </location>
</feature>
<feature type="transmembrane region" description="Helical" evidence="3">
    <location>
        <begin position="409"/>
        <end position="429"/>
    </location>
</feature>
<feature type="topological domain" description="Cytoplasmic" evidence="3">
    <location>
        <begin position="430"/>
        <end position="445"/>
    </location>
</feature>
<feature type="binding site" evidence="1">
    <location>
        <position position="23"/>
    </location>
    <ligand>
        <name>agmatine</name>
        <dbReference type="ChEBI" id="CHEBI:58145"/>
    </ligand>
</feature>
<feature type="binding site" evidence="1">
    <location>
        <position position="23"/>
    </location>
    <ligand>
        <name>L-arginine</name>
        <dbReference type="ChEBI" id="CHEBI:32682"/>
    </ligand>
</feature>
<feature type="binding site" evidence="1">
    <location>
        <position position="26"/>
    </location>
    <ligand>
        <name>L-arginine</name>
        <dbReference type="ChEBI" id="CHEBI:32682"/>
    </ligand>
</feature>
<feature type="binding site" evidence="1">
    <location>
        <position position="96"/>
    </location>
    <ligand>
        <name>agmatine</name>
        <dbReference type="ChEBI" id="CHEBI:58145"/>
    </ligand>
</feature>
<feature type="binding site" evidence="1">
    <location>
        <position position="96"/>
    </location>
    <ligand>
        <name>L-arginine</name>
        <dbReference type="ChEBI" id="CHEBI:32682"/>
    </ligand>
</feature>
<feature type="binding site" evidence="1">
    <location>
        <position position="97"/>
    </location>
    <ligand>
        <name>agmatine</name>
        <dbReference type="ChEBI" id="CHEBI:58145"/>
    </ligand>
</feature>
<feature type="binding site" evidence="1">
    <location>
        <position position="101"/>
    </location>
    <ligand>
        <name>agmatine</name>
        <dbReference type="ChEBI" id="CHEBI:58145"/>
    </ligand>
</feature>
<feature type="binding site" evidence="1">
    <location>
        <position position="202"/>
    </location>
    <ligand>
        <name>L-arginine</name>
        <dbReference type="ChEBI" id="CHEBI:32682"/>
    </ligand>
</feature>
<feature type="binding site" evidence="1">
    <location>
        <position position="205"/>
    </location>
    <ligand>
        <name>agmatine</name>
        <dbReference type="ChEBI" id="CHEBI:58145"/>
    </ligand>
</feature>
<feature type="binding site" evidence="1">
    <location>
        <position position="205"/>
    </location>
    <ligand>
        <name>L-arginine</name>
        <dbReference type="ChEBI" id="CHEBI:32682"/>
    </ligand>
</feature>
<feature type="binding site" evidence="1">
    <location>
        <position position="293"/>
    </location>
    <ligand>
        <name>agmatine</name>
        <dbReference type="ChEBI" id="CHEBI:58145"/>
    </ligand>
</feature>
<feature type="binding site" evidence="1">
    <location>
        <position position="357"/>
    </location>
    <ligand>
        <name>L-arginine</name>
        <dbReference type="ChEBI" id="CHEBI:32682"/>
    </ligand>
</feature>
<feature type="site" description="Cytoplasmic (distal) gate" evidence="1">
    <location>
        <position position="93"/>
    </location>
</feature>
<feature type="site" description="Periplasmic (proximal) gate" evidence="2">
    <location>
        <position position="202"/>
    </location>
</feature>
<feature type="site" description="Cytoplasmic (distal) gate" evidence="1">
    <location>
        <position position="208"/>
    </location>
</feature>
<feature type="site" description="Middle gate" evidence="2">
    <location>
        <position position="293"/>
    </location>
</feature>
<feature type="site" description="Cytoplasmic (distal) gate" evidence="1">
    <location>
        <position position="365"/>
    </location>
</feature>
<comment type="function">
    <text evidence="2">Major component of the acid-resistance (AR) system allowing enteric pathogens to survive the acidic environment in the stomach. Exchanges extracellular arginine for its intracellular decarboxylation product agmatine (Agm) thereby expelling intracellular protons. Probably undergoes several conformational states in order to translocate the substrate across the membrane; keeps the substrate accessible to only 1 side of the membrane at a time by opening and closing 3 membrane-internal gates.</text>
</comment>
<comment type="catalytic activity">
    <reaction evidence="1">
        <text>agmatine(in) + L-arginine(out) = agmatine(out) + L-arginine(in)</text>
        <dbReference type="Rhea" id="RHEA:29651"/>
        <dbReference type="ChEBI" id="CHEBI:32682"/>
        <dbReference type="ChEBI" id="CHEBI:58145"/>
    </reaction>
</comment>
<comment type="subunit">
    <text evidence="1">Homodimer; each subunit has its own individual transport capacity.</text>
</comment>
<comment type="subcellular location">
    <subcellularLocation>
        <location evidence="1">Cell inner membrane</location>
        <topology evidence="3">Multi-pass membrane protein</topology>
    </subcellularLocation>
</comment>
<comment type="domain">
    <text evidence="1">Each subunit has 12 transmembrane (TM) helices; TM1 and TM6 are interrupted by short non-helical Gly-rich loops in the middle of their transmembrane spans. Each subunit has a central cavity which binds substrate.</text>
</comment>
<comment type="similarity">
    <text evidence="4">Belongs to the amino acid-polyamine-organocation (APC) superfamily. Basic amino acid/polyamine antiporter (APA) (TC 2.A.3.2) family.</text>
</comment>
<reference key="1">
    <citation type="journal article" date="2002" name="Nucleic Acids Res.">
        <title>Genome sequence of Shigella flexneri 2a: insights into pathogenicity through comparison with genomes of Escherichia coli K12 and O157.</title>
        <authorList>
            <person name="Jin Q."/>
            <person name="Yuan Z."/>
            <person name="Xu J."/>
            <person name="Wang Y."/>
            <person name="Shen Y."/>
            <person name="Lu W."/>
            <person name="Wang J."/>
            <person name="Liu H."/>
            <person name="Yang J."/>
            <person name="Yang F."/>
            <person name="Zhang X."/>
            <person name="Zhang J."/>
            <person name="Yang G."/>
            <person name="Wu H."/>
            <person name="Qu D."/>
            <person name="Dong J."/>
            <person name="Sun L."/>
            <person name="Xue Y."/>
            <person name="Zhao A."/>
            <person name="Gao Y."/>
            <person name="Zhu J."/>
            <person name="Kan B."/>
            <person name="Ding K."/>
            <person name="Chen S."/>
            <person name="Cheng H."/>
            <person name="Yao Z."/>
            <person name="He B."/>
            <person name="Chen R."/>
            <person name="Ma D."/>
            <person name="Qiang B."/>
            <person name="Wen Y."/>
            <person name="Hou Y."/>
            <person name="Yu J."/>
        </authorList>
    </citation>
    <scope>NUCLEOTIDE SEQUENCE [LARGE SCALE GENOMIC DNA]</scope>
    <source>
        <strain>301 / Serotype 2a</strain>
    </source>
</reference>
<reference key="2">
    <citation type="journal article" date="2003" name="Infect. Immun.">
        <title>Complete genome sequence and comparative genomics of Shigella flexneri serotype 2a strain 2457T.</title>
        <authorList>
            <person name="Wei J."/>
            <person name="Goldberg M.B."/>
            <person name="Burland V."/>
            <person name="Venkatesan M.M."/>
            <person name="Deng W."/>
            <person name="Fournier G."/>
            <person name="Mayhew G.F."/>
            <person name="Plunkett G. III"/>
            <person name="Rose D.J."/>
            <person name="Darling A."/>
            <person name="Mau B."/>
            <person name="Perna N.T."/>
            <person name="Payne S.M."/>
            <person name="Runyen-Janecky L.J."/>
            <person name="Zhou S."/>
            <person name="Schwartz D.C."/>
            <person name="Blattner F.R."/>
        </authorList>
    </citation>
    <scope>NUCLEOTIDE SEQUENCE [LARGE SCALE GENOMIC DNA]</scope>
    <source>
        <strain>ATCC 700930 / 2457T / Serotype 2a</strain>
    </source>
</reference>